<protein>
    <recommendedName>
        <fullName>F-box protein SKIP24</fullName>
    </recommendedName>
    <alternativeName>
        <fullName>SKP1-interacting partner 24</fullName>
    </alternativeName>
</protein>
<name>SKI24_ARATH</name>
<gene>
    <name type="primary">SKIP24</name>
    <name type="ordered locus">At1g08710</name>
    <name type="ORF">F22O13.19</name>
</gene>
<proteinExistence type="evidence at protein level"/>
<dbReference type="EMBL" id="AC003981">
    <property type="protein sequence ID" value="AAF99761.1"/>
    <property type="status" value="ALT_SEQ"/>
    <property type="molecule type" value="Genomic_DNA"/>
</dbReference>
<dbReference type="EMBL" id="CP002684">
    <property type="protein sequence ID" value="AEE28337.1"/>
    <property type="molecule type" value="Genomic_DNA"/>
</dbReference>
<dbReference type="EMBL" id="CP002684">
    <property type="protein sequence ID" value="AEE28338.1"/>
    <property type="molecule type" value="Genomic_DNA"/>
</dbReference>
<dbReference type="EMBL" id="AY065275">
    <property type="protein sequence ID" value="AAL38751.1"/>
    <property type="molecule type" value="mRNA"/>
</dbReference>
<dbReference type="EMBL" id="AY133758">
    <property type="protein sequence ID" value="AAM91692.1"/>
    <property type="molecule type" value="mRNA"/>
</dbReference>
<dbReference type="EMBL" id="BX814640">
    <property type="status" value="NOT_ANNOTATED_CDS"/>
    <property type="molecule type" value="mRNA"/>
</dbReference>
<dbReference type="PIR" id="D86219">
    <property type="entry name" value="D86219"/>
</dbReference>
<dbReference type="PIR" id="T00725">
    <property type="entry name" value="T00725"/>
</dbReference>
<dbReference type="RefSeq" id="NP_001077493.1">
    <molecule id="Q9CAZ0-1"/>
    <property type="nucleotide sequence ID" value="NM_001084024.2"/>
</dbReference>
<dbReference type="RefSeq" id="NP_172347.2">
    <molecule id="Q9CAZ0-2"/>
    <property type="nucleotide sequence ID" value="NM_100744.3"/>
</dbReference>
<dbReference type="SMR" id="Q9CAZ0"/>
<dbReference type="BioGRID" id="22633">
    <property type="interactions" value="2"/>
</dbReference>
<dbReference type="FunCoup" id="Q9CAZ0">
    <property type="interactions" value="1254"/>
</dbReference>
<dbReference type="IntAct" id="Q9CAZ0">
    <property type="interactions" value="2"/>
</dbReference>
<dbReference type="STRING" id="3702.Q9CAZ0"/>
<dbReference type="PaxDb" id="3702-AT1G08710.2"/>
<dbReference type="ProteomicsDB" id="232591">
    <molecule id="Q9CAZ0-1"/>
</dbReference>
<dbReference type="EnsemblPlants" id="AT1G08710.1">
    <molecule id="Q9CAZ0-2"/>
    <property type="protein sequence ID" value="AT1G08710.1"/>
    <property type="gene ID" value="AT1G08710"/>
</dbReference>
<dbReference type="EnsemblPlants" id="AT1G08710.2">
    <molecule id="Q9CAZ0-1"/>
    <property type="protein sequence ID" value="AT1G08710.2"/>
    <property type="gene ID" value="AT1G08710"/>
</dbReference>
<dbReference type="GeneID" id="837392"/>
<dbReference type="Gramene" id="AT1G08710.1">
    <molecule id="Q9CAZ0-2"/>
    <property type="protein sequence ID" value="AT1G08710.1"/>
    <property type="gene ID" value="AT1G08710"/>
</dbReference>
<dbReference type="Gramene" id="AT1G08710.2">
    <molecule id="Q9CAZ0-1"/>
    <property type="protein sequence ID" value="AT1G08710.2"/>
    <property type="gene ID" value="AT1G08710"/>
</dbReference>
<dbReference type="KEGG" id="ath:AT1G08710"/>
<dbReference type="Araport" id="AT1G08710"/>
<dbReference type="TAIR" id="AT1G08710"/>
<dbReference type="eggNOG" id="ENOG502QWB0">
    <property type="taxonomic scope" value="Eukaryota"/>
</dbReference>
<dbReference type="InParanoid" id="Q9CAZ0"/>
<dbReference type="OMA" id="PDEIWSR"/>
<dbReference type="OrthoDB" id="3219396at2759"/>
<dbReference type="PhylomeDB" id="Q9CAZ0"/>
<dbReference type="UniPathway" id="UPA00143"/>
<dbReference type="PRO" id="PR:Q9CAZ0"/>
<dbReference type="Proteomes" id="UP000006548">
    <property type="component" value="Chromosome 1"/>
</dbReference>
<dbReference type="ExpressionAtlas" id="Q9CAZ0">
    <property type="expression patterns" value="baseline and differential"/>
</dbReference>
<dbReference type="GO" id="GO:0005634">
    <property type="term" value="C:nucleus"/>
    <property type="evidence" value="ECO:0000314"/>
    <property type="project" value="TAIR"/>
</dbReference>
<dbReference type="GO" id="GO:0005886">
    <property type="term" value="C:plasma membrane"/>
    <property type="evidence" value="ECO:0000314"/>
    <property type="project" value="TAIR"/>
</dbReference>
<dbReference type="GO" id="GO:0016567">
    <property type="term" value="P:protein ubiquitination"/>
    <property type="evidence" value="ECO:0007669"/>
    <property type="project" value="UniProtKB-UniPathway"/>
</dbReference>
<dbReference type="InterPro" id="IPR036047">
    <property type="entry name" value="F-box-like_dom_sf"/>
</dbReference>
<dbReference type="SUPFAM" id="SSF81383">
    <property type="entry name" value="F-box domain"/>
    <property type="match status" value="1"/>
</dbReference>
<evidence type="ECO:0000250" key="1"/>
<evidence type="ECO:0000255" key="2"/>
<evidence type="ECO:0000256" key="3">
    <source>
        <dbReference type="SAM" id="MobiDB-lite"/>
    </source>
</evidence>
<evidence type="ECO:0000269" key="4">
    <source>
    </source>
</evidence>
<evidence type="ECO:0000303" key="5">
    <source>
    </source>
</evidence>
<evidence type="ECO:0000305" key="6"/>
<reference key="1">
    <citation type="journal article" date="2000" name="Nature">
        <title>Sequence and analysis of chromosome 1 of the plant Arabidopsis thaliana.</title>
        <authorList>
            <person name="Theologis A."/>
            <person name="Ecker J.R."/>
            <person name="Palm C.J."/>
            <person name="Federspiel N.A."/>
            <person name="Kaul S."/>
            <person name="White O."/>
            <person name="Alonso J."/>
            <person name="Altafi H."/>
            <person name="Araujo R."/>
            <person name="Bowman C.L."/>
            <person name="Brooks S.Y."/>
            <person name="Buehler E."/>
            <person name="Chan A."/>
            <person name="Chao Q."/>
            <person name="Chen H."/>
            <person name="Cheuk R.F."/>
            <person name="Chin C.W."/>
            <person name="Chung M.K."/>
            <person name="Conn L."/>
            <person name="Conway A.B."/>
            <person name="Conway A.R."/>
            <person name="Creasy T.H."/>
            <person name="Dewar K."/>
            <person name="Dunn P."/>
            <person name="Etgu P."/>
            <person name="Feldblyum T.V."/>
            <person name="Feng J.-D."/>
            <person name="Fong B."/>
            <person name="Fujii C.Y."/>
            <person name="Gill J.E."/>
            <person name="Goldsmith A.D."/>
            <person name="Haas B."/>
            <person name="Hansen N.F."/>
            <person name="Hughes B."/>
            <person name="Huizar L."/>
            <person name="Hunter J.L."/>
            <person name="Jenkins J."/>
            <person name="Johnson-Hopson C."/>
            <person name="Khan S."/>
            <person name="Khaykin E."/>
            <person name="Kim C.J."/>
            <person name="Koo H.L."/>
            <person name="Kremenetskaia I."/>
            <person name="Kurtz D.B."/>
            <person name="Kwan A."/>
            <person name="Lam B."/>
            <person name="Langin-Hooper S."/>
            <person name="Lee A."/>
            <person name="Lee J.M."/>
            <person name="Lenz C.A."/>
            <person name="Li J.H."/>
            <person name="Li Y.-P."/>
            <person name="Lin X."/>
            <person name="Liu S.X."/>
            <person name="Liu Z.A."/>
            <person name="Luros J.S."/>
            <person name="Maiti R."/>
            <person name="Marziali A."/>
            <person name="Militscher J."/>
            <person name="Miranda M."/>
            <person name="Nguyen M."/>
            <person name="Nierman W.C."/>
            <person name="Osborne B.I."/>
            <person name="Pai G."/>
            <person name="Peterson J."/>
            <person name="Pham P.K."/>
            <person name="Rizzo M."/>
            <person name="Rooney T."/>
            <person name="Rowley D."/>
            <person name="Sakano H."/>
            <person name="Salzberg S.L."/>
            <person name="Schwartz J.R."/>
            <person name="Shinn P."/>
            <person name="Southwick A.M."/>
            <person name="Sun H."/>
            <person name="Tallon L.J."/>
            <person name="Tambunga G."/>
            <person name="Toriumi M.J."/>
            <person name="Town C.D."/>
            <person name="Utterback T."/>
            <person name="Van Aken S."/>
            <person name="Vaysberg M."/>
            <person name="Vysotskaia V.S."/>
            <person name="Walker M."/>
            <person name="Wu D."/>
            <person name="Yu G."/>
            <person name="Fraser C.M."/>
            <person name="Venter J.C."/>
            <person name="Davis R.W."/>
        </authorList>
    </citation>
    <scope>NUCLEOTIDE SEQUENCE [LARGE SCALE GENOMIC DNA]</scope>
    <source>
        <strain>cv. Columbia</strain>
    </source>
</reference>
<reference key="2">
    <citation type="journal article" date="2017" name="Plant J.">
        <title>Araport11: a complete reannotation of the Arabidopsis thaliana reference genome.</title>
        <authorList>
            <person name="Cheng C.Y."/>
            <person name="Krishnakumar V."/>
            <person name="Chan A.P."/>
            <person name="Thibaud-Nissen F."/>
            <person name="Schobel S."/>
            <person name="Town C.D."/>
        </authorList>
    </citation>
    <scope>GENOME REANNOTATION</scope>
    <source>
        <strain>cv. Columbia</strain>
    </source>
</reference>
<reference key="3">
    <citation type="journal article" date="2003" name="Science">
        <title>Empirical analysis of transcriptional activity in the Arabidopsis genome.</title>
        <authorList>
            <person name="Yamada K."/>
            <person name="Lim J."/>
            <person name="Dale J.M."/>
            <person name="Chen H."/>
            <person name="Shinn P."/>
            <person name="Palm C.J."/>
            <person name="Southwick A.M."/>
            <person name="Wu H.C."/>
            <person name="Kim C.J."/>
            <person name="Nguyen M."/>
            <person name="Pham P.K."/>
            <person name="Cheuk R.F."/>
            <person name="Karlin-Newmann G."/>
            <person name="Liu S.X."/>
            <person name="Lam B."/>
            <person name="Sakano H."/>
            <person name="Wu T."/>
            <person name="Yu G."/>
            <person name="Miranda M."/>
            <person name="Quach H.L."/>
            <person name="Tripp M."/>
            <person name="Chang C.H."/>
            <person name="Lee J.M."/>
            <person name="Toriumi M.J."/>
            <person name="Chan M.M."/>
            <person name="Tang C.C."/>
            <person name="Onodera C.S."/>
            <person name="Deng J.M."/>
            <person name="Akiyama K."/>
            <person name="Ansari Y."/>
            <person name="Arakawa T."/>
            <person name="Banh J."/>
            <person name="Banno F."/>
            <person name="Bowser L."/>
            <person name="Brooks S.Y."/>
            <person name="Carninci P."/>
            <person name="Chao Q."/>
            <person name="Choy N."/>
            <person name="Enju A."/>
            <person name="Goldsmith A.D."/>
            <person name="Gurjal M."/>
            <person name="Hansen N.F."/>
            <person name="Hayashizaki Y."/>
            <person name="Johnson-Hopson C."/>
            <person name="Hsuan V.W."/>
            <person name="Iida K."/>
            <person name="Karnes M."/>
            <person name="Khan S."/>
            <person name="Koesema E."/>
            <person name="Ishida J."/>
            <person name="Jiang P.X."/>
            <person name="Jones T."/>
            <person name="Kawai J."/>
            <person name="Kamiya A."/>
            <person name="Meyers C."/>
            <person name="Nakajima M."/>
            <person name="Narusaka M."/>
            <person name="Seki M."/>
            <person name="Sakurai T."/>
            <person name="Satou M."/>
            <person name="Tamse R."/>
            <person name="Vaysberg M."/>
            <person name="Wallender E.K."/>
            <person name="Wong C."/>
            <person name="Yamamura Y."/>
            <person name="Yuan S."/>
            <person name="Shinozaki K."/>
            <person name="Davis R.W."/>
            <person name="Theologis A."/>
            <person name="Ecker J.R."/>
        </authorList>
    </citation>
    <scope>NUCLEOTIDE SEQUENCE [LARGE SCALE MRNA] (ISOFORM 2)</scope>
    <source>
        <strain>cv. Columbia</strain>
    </source>
</reference>
<reference key="4">
    <citation type="journal article" date="2004" name="Genome Res.">
        <title>Whole genome sequence comparisons and 'full-length' cDNA sequences: a combined approach to evaluate and improve Arabidopsis genome annotation.</title>
        <authorList>
            <person name="Castelli V."/>
            <person name="Aury J.-M."/>
            <person name="Jaillon O."/>
            <person name="Wincker P."/>
            <person name="Clepet C."/>
            <person name="Menard M."/>
            <person name="Cruaud C."/>
            <person name="Quetier F."/>
            <person name="Scarpelli C."/>
            <person name="Schaechter V."/>
            <person name="Temple G."/>
            <person name="Caboche M."/>
            <person name="Weissenbach J."/>
            <person name="Salanoubat M."/>
        </authorList>
    </citation>
    <scope>NUCLEOTIDE SEQUENCE [LARGE SCALE MRNA] OF 7-295 (ISOFORM 1)</scope>
    <source>
        <strain>cv. Columbia</strain>
    </source>
</reference>
<reference key="5">
    <citation type="journal article" date="2003" name="Plant J.">
        <title>Protein interaction analysis of SCF ubiquitin E3 ligase subunits from Arabidopsis.</title>
        <authorList>
            <person name="Risseeuw E.P."/>
            <person name="Daskalchuk T.E."/>
            <person name="Banks T.W."/>
            <person name="Liu E."/>
            <person name="Cotelesage J."/>
            <person name="Hellmann H."/>
            <person name="Estelle M."/>
            <person name="Somers D.E."/>
            <person name="Crosby W.L."/>
        </authorList>
    </citation>
    <scope>INTERACTION WITH SKP1A/ASK1 AND SPK1B/ASK2</scope>
</reference>
<comment type="function">
    <text evidence="1">Component of SCF(ASK-cullin-F-box) E3 ubiquitin ligase complexes, which may mediate the ubiquitination and subsequent proteasomal degradation of target proteins.</text>
</comment>
<comment type="pathway">
    <text>Protein modification; protein ubiquitination.</text>
</comment>
<comment type="subunit">
    <text evidence="1 4">Part of a SCF (ASK-cullin-F-box) protein ligase complex (By similarity). Interacts with SKP1A/ASK1 and SPK1B/ASK2.</text>
</comment>
<comment type="alternative products">
    <event type="alternative splicing"/>
    <isoform>
        <id>Q9CAZ0-1</id>
        <name>1</name>
        <sequence type="displayed"/>
    </isoform>
    <isoform>
        <id>Q9CAZ0-2</id>
        <name>2</name>
        <sequence type="described" ref="VSP_037359"/>
    </isoform>
</comment>
<comment type="domain">
    <text evidence="1">The F-box is necessary for the interaction with ASK proteins.</text>
</comment>
<comment type="sequence caution" evidence="6">
    <conflict type="erroneous gene model prediction">
        <sequence resource="EMBL-CDS" id="AAF99761"/>
    </conflict>
</comment>
<comment type="sequence caution" evidence="6">
    <conflict type="frameshift">
        <sequence resource="EMBL" id="BX814640"/>
    </conflict>
</comment>
<organism>
    <name type="scientific">Arabidopsis thaliana</name>
    <name type="common">Mouse-ear cress</name>
    <dbReference type="NCBI Taxonomy" id="3702"/>
    <lineage>
        <taxon>Eukaryota</taxon>
        <taxon>Viridiplantae</taxon>
        <taxon>Streptophyta</taxon>
        <taxon>Embryophyta</taxon>
        <taxon>Tracheophyta</taxon>
        <taxon>Spermatophyta</taxon>
        <taxon>Magnoliopsida</taxon>
        <taxon>eudicotyledons</taxon>
        <taxon>Gunneridae</taxon>
        <taxon>Pentapetalae</taxon>
        <taxon>rosids</taxon>
        <taxon>malvids</taxon>
        <taxon>Brassicales</taxon>
        <taxon>Brassicaceae</taxon>
        <taxon>Camelineae</taxon>
        <taxon>Arabidopsis</taxon>
    </lineage>
</organism>
<keyword id="KW-0025">Alternative splicing</keyword>
<keyword id="KW-0175">Coiled coil</keyword>
<keyword id="KW-1185">Reference proteome</keyword>
<keyword id="KW-0833">Ubl conjugation pathway</keyword>
<sequence length="295" mass="34341">MSANEIPDELWRKILEIGVKSSTFSYKDLCCISISSRRLFRLSCDDSLWDLLLVHDFPNHIVSASSSSESPTKFIYMTRFEREKERKLAAHRRALLRKESEISEWGRRIRELEARLSDEAERLQSSSLQFSDLLKVRQASVALNVWQPEVVRGRQKQMVEQNAVPVEGRLRALEMEMKLCKQQIMGLNRALREVKHRYDIAIKELESMKYHPLRDYKSIRNGDQGSNGKTKKLKTSINYSGDQVSNGKRRKLKTSIDCKFMNISHFSSCSSVTEKFYSYSPKIIHEYIPENLLVL</sequence>
<feature type="chain" id="PRO_0000375239" description="F-box protein SKIP24">
    <location>
        <begin position="1"/>
        <end position="295"/>
    </location>
</feature>
<feature type="domain" description="F-box; degenerate">
    <location>
        <begin position="19"/>
        <end position="66"/>
    </location>
</feature>
<feature type="region of interest" description="Disordered" evidence="3">
    <location>
        <begin position="217"/>
        <end position="245"/>
    </location>
</feature>
<feature type="coiled-coil region" evidence="2">
    <location>
        <begin position="82"/>
        <end position="129"/>
    </location>
</feature>
<feature type="coiled-coil region" evidence="2">
    <location>
        <begin position="167"/>
        <end position="209"/>
    </location>
</feature>
<feature type="compositionally biased region" description="Polar residues" evidence="3">
    <location>
        <begin position="235"/>
        <end position="245"/>
    </location>
</feature>
<feature type="splice variant" id="VSP_037359" description="In isoform 2." evidence="5">
    <original>CKFMNISHFSSCSSVTEKFYSYSPKIIHEYIPENLLVL</original>
    <variation>FPAKPRNTEKLFQSESE</variation>
    <location>
        <begin position="258"/>
        <end position="295"/>
    </location>
</feature>
<feature type="sequence conflict" description="In Ref. 4; BX814640." evidence="6" ref="4">
    <original>DL</original>
    <variation>EG</variation>
    <location>
        <begin position="28"/>
        <end position="29"/>
    </location>
</feature>
<feature type="sequence conflict" description="In Ref. 4; BX814640." evidence="6" ref="4">
    <original>V</original>
    <variation>L</variation>
    <location>
        <position position="136"/>
    </location>
</feature>
<accession>Q9CAZ0</accession>
<accession>Q8VZ41</accession>